<feature type="chain" id="PRO_1000047785" description="Cell division topological specificity factor">
    <location>
        <begin position="1"/>
        <end position="89"/>
    </location>
</feature>
<keyword id="KW-0131">Cell cycle</keyword>
<keyword id="KW-0132">Cell division</keyword>
<gene>
    <name evidence="1" type="primary">minE</name>
    <name type="ordered locus">mma_1173</name>
</gene>
<accession>A6SX66</accession>
<dbReference type="EMBL" id="CP000269">
    <property type="protein sequence ID" value="ABR91721.1"/>
    <property type="molecule type" value="Genomic_DNA"/>
</dbReference>
<dbReference type="RefSeq" id="WP_012079030.1">
    <property type="nucleotide sequence ID" value="NC_009659.1"/>
</dbReference>
<dbReference type="SMR" id="A6SX66"/>
<dbReference type="STRING" id="375286.mma_1173"/>
<dbReference type="KEGG" id="mms:mma_1173"/>
<dbReference type="eggNOG" id="COG0851">
    <property type="taxonomic scope" value="Bacteria"/>
</dbReference>
<dbReference type="HOGENOM" id="CLU_137929_2_1_4"/>
<dbReference type="OrthoDB" id="9802655at2"/>
<dbReference type="Proteomes" id="UP000006388">
    <property type="component" value="Chromosome"/>
</dbReference>
<dbReference type="GO" id="GO:0051301">
    <property type="term" value="P:cell division"/>
    <property type="evidence" value="ECO:0007669"/>
    <property type="project" value="UniProtKB-KW"/>
</dbReference>
<dbReference type="GO" id="GO:0032955">
    <property type="term" value="P:regulation of division septum assembly"/>
    <property type="evidence" value="ECO:0007669"/>
    <property type="project" value="InterPro"/>
</dbReference>
<dbReference type="FunFam" id="3.30.1070.10:FF:000001">
    <property type="entry name" value="Cell division topological specificity factor"/>
    <property type="match status" value="1"/>
</dbReference>
<dbReference type="Gene3D" id="3.30.1070.10">
    <property type="entry name" value="Cell division topological specificity factor MinE"/>
    <property type="match status" value="1"/>
</dbReference>
<dbReference type="HAMAP" id="MF_00262">
    <property type="entry name" value="MinE"/>
    <property type="match status" value="1"/>
</dbReference>
<dbReference type="InterPro" id="IPR005527">
    <property type="entry name" value="MinE"/>
</dbReference>
<dbReference type="InterPro" id="IPR036707">
    <property type="entry name" value="MinE_sf"/>
</dbReference>
<dbReference type="NCBIfam" id="TIGR01215">
    <property type="entry name" value="minE"/>
    <property type="match status" value="1"/>
</dbReference>
<dbReference type="NCBIfam" id="NF001422">
    <property type="entry name" value="PRK00296.1"/>
    <property type="match status" value="1"/>
</dbReference>
<dbReference type="NCBIfam" id="NF010595">
    <property type="entry name" value="PRK13989.1"/>
    <property type="match status" value="1"/>
</dbReference>
<dbReference type="Pfam" id="PF03776">
    <property type="entry name" value="MinE"/>
    <property type="match status" value="1"/>
</dbReference>
<dbReference type="SUPFAM" id="SSF55229">
    <property type="entry name" value="Cell division protein MinE topological specificity domain"/>
    <property type="match status" value="1"/>
</dbReference>
<sequence>MALLSFLFNSKPKTASAAKERLQIIIARERNGRAGPDFLPALHQELIAVISKYVKVNPDDIKISLNSQGNLEVLDVNVVLPDDAIEAVK</sequence>
<proteinExistence type="inferred from homology"/>
<evidence type="ECO:0000255" key="1">
    <source>
        <dbReference type="HAMAP-Rule" id="MF_00262"/>
    </source>
</evidence>
<reference key="1">
    <citation type="journal article" date="2007" name="PLoS Genet.">
        <title>Genome analysis of Minibacterium massiliensis highlights the convergent evolution of water-living bacteria.</title>
        <authorList>
            <person name="Audic S."/>
            <person name="Robert C."/>
            <person name="Campagna B."/>
            <person name="Parinello H."/>
            <person name="Claverie J.-M."/>
            <person name="Raoult D."/>
            <person name="Drancourt M."/>
        </authorList>
    </citation>
    <scope>NUCLEOTIDE SEQUENCE [LARGE SCALE GENOMIC DNA]</scope>
    <source>
        <strain>Marseille</strain>
    </source>
</reference>
<name>MINE_JANMA</name>
<organism>
    <name type="scientific">Janthinobacterium sp. (strain Marseille)</name>
    <name type="common">Minibacterium massiliensis</name>
    <dbReference type="NCBI Taxonomy" id="375286"/>
    <lineage>
        <taxon>Bacteria</taxon>
        <taxon>Pseudomonadati</taxon>
        <taxon>Pseudomonadota</taxon>
        <taxon>Betaproteobacteria</taxon>
        <taxon>Burkholderiales</taxon>
        <taxon>Oxalobacteraceae</taxon>
        <taxon>Janthinobacterium</taxon>
    </lineage>
</organism>
<comment type="function">
    <text evidence="1">Prevents the cell division inhibition by proteins MinC and MinD at internal division sites while permitting inhibition at polar sites. This ensures cell division at the proper site by restricting the formation of a division septum at the midpoint of the long axis of the cell.</text>
</comment>
<comment type="similarity">
    <text evidence="1">Belongs to the MinE family.</text>
</comment>
<protein>
    <recommendedName>
        <fullName evidence="1">Cell division topological specificity factor</fullName>
    </recommendedName>
</protein>